<feature type="signal peptide" evidence="2">
    <location>
        <begin position="1"/>
        <end position="20"/>
    </location>
</feature>
<feature type="chain" id="PRO_0000295275" description="Peptidoglycan recognition protein 4">
    <location>
        <begin position="21"/>
        <end position="374"/>
    </location>
</feature>
<feature type="domain" description="N-acetylmuramoyl-L-alanine amidase 1" evidence="2">
    <location>
        <begin position="76"/>
        <end position="212"/>
    </location>
</feature>
<feature type="domain" description="N-acetylmuramoyl-L-alanine amidase 2" evidence="2">
    <location>
        <begin position="233"/>
        <end position="359"/>
    </location>
</feature>
<feature type="region of interest" description="Interaction with murein" evidence="1">
    <location>
        <begin position="294"/>
        <end position="303"/>
    </location>
</feature>
<feature type="region of interest" description="Interaction with murein" evidence="1">
    <location>
        <begin position="354"/>
        <end position="355"/>
    </location>
</feature>
<feature type="binding site" evidence="1">
    <location>
        <position position="275"/>
    </location>
    <ligand>
        <name>peptidoglycan</name>
        <dbReference type="ChEBI" id="CHEBI:8005"/>
    </ligand>
</feature>
<feature type="glycosylation site" description="N-linked (GlcNAc...) asparagine" evidence="2">
    <location>
        <position position="39"/>
    </location>
</feature>
<feature type="glycosylation site" description="N-linked (GlcNAc...) asparagine" evidence="2">
    <location>
        <position position="93"/>
    </location>
</feature>
<feature type="glycosylation site" description="N-linked (GlcNAc...) asparagine" evidence="2">
    <location>
        <position position="146"/>
    </location>
</feature>
<feature type="disulfide bond" evidence="1">
    <location>
        <begin position="211"/>
        <end position="333"/>
    </location>
</feature>
<feature type="disulfide bond" evidence="1">
    <location>
        <begin position="227"/>
        <end position="271"/>
    </location>
</feature>
<feature type="disulfide bond" evidence="1">
    <location>
        <begin position="247"/>
        <end position="253"/>
    </location>
</feature>
<feature type="sequence conflict" description="In Ref. 1; AAS49173." evidence="4" ref="1">
    <original>A</original>
    <variation>T</variation>
    <location>
        <position position="334"/>
    </location>
</feature>
<evidence type="ECO:0000250" key="1"/>
<evidence type="ECO:0000255" key="2"/>
<evidence type="ECO:0000269" key="3">
    <source>
    </source>
</evidence>
<evidence type="ECO:0000305" key="4"/>
<organism>
    <name type="scientific">Mus musculus</name>
    <name type="common">Mouse</name>
    <dbReference type="NCBI Taxonomy" id="10090"/>
    <lineage>
        <taxon>Eukaryota</taxon>
        <taxon>Metazoa</taxon>
        <taxon>Chordata</taxon>
        <taxon>Craniata</taxon>
        <taxon>Vertebrata</taxon>
        <taxon>Euteleostomi</taxon>
        <taxon>Mammalia</taxon>
        <taxon>Eutheria</taxon>
        <taxon>Euarchontoglires</taxon>
        <taxon>Glires</taxon>
        <taxon>Rodentia</taxon>
        <taxon>Myomorpha</taxon>
        <taxon>Muroidea</taxon>
        <taxon>Muridae</taxon>
        <taxon>Murinae</taxon>
        <taxon>Mus</taxon>
        <taxon>Mus</taxon>
    </lineage>
</organism>
<dbReference type="EMBL" id="AY518699">
    <property type="protein sequence ID" value="AAS49173.1"/>
    <property type="molecule type" value="mRNA"/>
</dbReference>
<dbReference type="EMBL" id="BC120840">
    <property type="protein sequence ID" value="AAI20841.1"/>
    <property type="molecule type" value="mRNA"/>
</dbReference>
<dbReference type="CCDS" id="CCDS17544.1"/>
<dbReference type="RefSeq" id="NP_997146.2">
    <property type="nucleotide sequence ID" value="NM_207263.3"/>
</dbReference>
<dbReference type="SMR" id="Q0VB07"/>
<dbReference type="FunCoup" id="Q0VB07">
    <property type="interactions" value="1"/>
</dbReference>
<dbReference type="STRING" id="10090.ENSMUSP00000128113"/>
<dbReference type="GlyCosmos" id="Q0VB07">
    <property type="glycosylation" value="3 sites, No reported glycans"/>
</dbReference>
<dbReference type="GlyGen" id="Q0VB07">
    <property type="glycosylation" value="3 sites"/>
</dbReference>
<dbReference type="iPTMnet" id="Q0VB07"/>
<dbReference type="PhosphoSitePlus" id="Q0VB07"/>
<dbReference type="jPOST" id="Q0VB07"/>
<dbReference type="PaxDb" id="10090-ENSMUSP00000040755"/>
<dbReference type="ProteomicsDB" id="288188"/>
<dbReference type="Antibodypedia" id="34122">
    <property type="antibodies" value="177 antibodies from 25 providers"/>
</dbReference>
<dbReference type="DNASU" id="384997"/>
<dbReference type="Ensembl" id="ENSMUST00000047745.6">
    <property type="protein sequence ID" value="ENSMUSP00000040755.6"/>
    <property type="gene ID" value="ENSMUSG00000042250.14"/>
</dbReference>
<dbReference type="GeneID" id="384997"/>
<dbReference type="KEGG" id="mmu:384997"/>
<dbReference type="UCSC" id="uc008qdg.2">
    <property type="organism name" value="mouse"/>
</dbReference>
<dbReference type="AGR" id="MGI:2686324"/>
<dbReference type="CTD" id="57115"/>
<dbReference type="MGI" id="MGI:2686324">
    <property type="gene designation" value="Pglyrp4"/>
</dbReference>
<dbReference type="VEuPathDB" id="HostDB:ENSMUSG00000042250"/>
<dbReference type="eggNOG" id="ENOG502S2KY">
    <property type="taxonomic scope" value="Eukaryota"/>
</dbReference>
<dbReference type="GeneTree" id="ENSGT00940000162349"/>
<dbReference type="InParanoid" id="Q0VB07"/>
<dbReference type="OMA" id="AREAHCP"/>
<dbReference type="OrthoDB" id="10001926at2759"/>
<dbReference type="TreeFam" id="TF323898"/>
<dbReference type="Reactome" id="R-MMU-6803157">
    <property type="pathway name" value="Antimicrobial peptides"/>
</dbReference>
<dbReference type="BioGRID-ORCS" id="384997">
    <property type="hits" value="4 hits in 78 CRISPR screens"/>
</dbReference>
<dbReference type="PRO" id="PR:Q0VB07"/>
<dbReference type="Proteomes" id="UP000000589">
    <property type="component" value="Chromosome 3"/>
</dbReference>
<dbReference type="RNAct" id="Q0VB07">
    <property type="molecule type" value="protein"/>
</dbReference>
<dbReference type="Bgee" id="ENSMUSG00000042250">
    <property type="expression patterns" value="Expressed in esophagus and 10 other cell types or tissues"/>
</dbReference>
<dbReference type="ExpressionAtlas" id="Q0VB07">
    <property type="expression patterns" value="baseline and differential"/>
</dbReference>
<dbReference type="GO" id="GO:0005576">
    <property type="term" value="C:extracellular region"/>
    <property type="evidence" value="ECO:0007669"/>
    <property type="project" value="UniProtKB-SubCell"/>
</dbReference>
<dbReference type="GO" id="GO:0008745">
    <property type="term" value="F:N-acetylmuramoyl-L-alanine amidase activity"/>
    <property type="evidence" value="ECO:0007669"/>
    <property type="project" value="InterPro"/>
</dbReference>
<dbReference type="GO" id="GO:0042834">
    <property type="term" value="F:peptidoglycan binding"/>
    <property type="evidence" value="ECO:0000250"/>
    <property type="project" value="UniProtKB"/>
</dbReference>
<dbReference type="GO" id="GO:0008270">
    <property type="term" value="F:zinc ion binding"/>
    <property type="evidence" value="ECO:0007669"/>
    <property type="project" value="InterPro"/>
</dbReference>
<dbReference type="GO" id="GO:0051701">
    <property type="term" value="P:biological process involved in interaction with host"/>
    <property type="evidence" value="ECO:0000315"/>
    <property type="project" value="MGI"/>
</dbReference>
<dbReference type="GO" id="GO:0042742">
    <property type="term" value="P:defense response to bacterium"/>
    <property type="evidence" value="ECO:0007669"/>
    <property type="project" value="UniProtKB-KW"/>
</dbReference>
<dbReference type="GO" id="GO:0045087">
    <property type="term" value="P:innate immune response"/>
    <property type="evidence" value="ECO:0007669"/>
    <property type="project" value="UniProtKB-KW"/>
</dbReference>
<dbReference type="GO" id="GO:0032827">
    <property type="term" value="P:negative regulation of natural killer cell differentiation involved in immune response"/>
    <property type="evidence" value="ECO:0000315"/>
    <property type="project" value="MGI"/>
</dbReference>
<dbReference type="GO" id="GO:0032689">
    <property type="term" value="P:negative regulation of type II interferon production"/>
    <property type="evidence" value="ECO:0000315"/>
    <property type="project" value="MGI"/>
</dbReference>
<dbReference type="GO" id="GO:0009253">
    <property type="term" value="P:peptidoglycan catabolic process"/>
    <property type="evidence" value="ECO:0007669"/>
    <property type="project" value="InterPro"/>
</dbReference>
<dbReference type="CDD" id="cd06583">
    <property type="entry name" value="PGRP"/>
    <property type="match status" value="2"/>
</dbReference>
<dbReference type="FunFam" id="3.40.80.10:FF:000001">
    <property type="entry name" value="Peptidoglycan recognition protein 1"/>
    <property type="match status" value="1"/>
</dbReference>
<dbReference type="FunFam" id="3.40.80.10:FF:000004">
    <property type="entry name" value="Peptidoglycan recognition protein 4"/>
    <property type="match status" value="1"/>
</dbReference>
<dbReference type="Gene3D" id="3.40.80.10">
    <property type="entry name" value="Peptidoglycan recognition protein-like"/>
    <property type="match status" value="2"/>
</dbReference>
<dbReference type="InterPro" id="IPR036505">
    <property type="entry name" value="Amidase/PGRP_sf"/>
</dbReference>
<dbReference type="InterPro" id="IPR002502">
    <property type="entry name" value="Amidase_domain"/>
</dbReference>
<dbReference type="InterPro" id="IPR015510">
    <property type="entry name" value="PGRP"/>
</dbReference>
<dbReference type="InterPro" id="IPR006619">
    <property type="entry name" value="PGRP_domain_met/bac"/>
</dbReference>
<dbReference type="PANTHER" id="PTHR11022">
    <property type="entry name" value="PEPTIDOGLYCAN RECOGNITION PROTEIN"/>
    <property type="match status" value="1"/>
</dbReference>
<dbReference type="PANTHER" id="PTHR11022:SF12">
    <property type="entry name" value="PEPTIDOGLYCAN RECOGNITION PROTEIN 3"/>
    <property type="match status" value="1"/>
</dbReference>
<dbReference type="Pfam" id="PF01510">
    <property type="entry name" value="Amidase_2"/>
    <property type="match status" value="2"/>
</dbReference>
<dbReference type="SMART" id="SM00644">
    <property type="entry name" value="Ami_2"/>
    <property type="match status" value="2"/>
</dbReference>
<dbReference type="SMART" id="SM00701">
    <property type="entry name" value="PGRP"/>
    <property type="match status" value="2"/>
</dbReference>
<dbReference type="SUPFAM" id="SSF55846">
    <property type="entry name" value="N-acetylmuramoyl-L-alanine amidase-like"/>
    <property type="match status" value="2"/>
</dbReference>
<name>PGRP4_MOUSE</name>
<keyword id="KW-0044">Antibiotic</keyword>
<keyword id="KW-0929">Antimicrobial</keyword>
<keyword id="KW-1015">Disulfide bond</keyword>
<keyword id="KW-0325">Glycoprotein</keyword>
<keyword id="KW-0391">Immunity</keyword>
<keyword id="KW-0399">Innate immunity</keyword>
<keyword id="KW-1185">Reference proteome</keyword>
<keyword id="KW-0677">Repeat</keyword>
<keyword id="KW-0964">Secreted</keyword>
<keyword id="KW-0732">Signal</keyword>
<protein>
    <recommendedName>
        <fullName>Peptidoglycan recognition protein 4</fullName>
    </recommendedName>
    <alternativeName>
        <fullName>Peptidoglycan recognition protein I-beta</fullName>
        <shortName>PGLYRPIbeta</shortName>
        <shortName>PGRP-I-beta</shortName>
    </alternativeName>
    <alternativeName>
        <fullName>Peptidoglycan recognition protein intermediate beta</fullName>
    </alternativeName>
</protein>
<reference key="1">
    <citation type="journal article" date="2004" name="Genomics">
        <title>Murine peptidoglycan recognition proteins PglyrpIalpha and PglyrpIbeta are encoded in the epidermal differentiation complex and are expressed in epidermal and hematopoietic tissues.</title>
        <authorList>
            <person name="Mathur P."/>
            <person name="Murray B."/>
            <person name="Crowell T."/>
            <person name="Gardner H."/>
            <person name="Allaire N."/>
            <person name="Hsu Y.-M."/>
            <person name="Thill G."/>
            <person name="Carulli J.P."/>
        </authorList>
    </citation>
    <scope>NUCLEOTIDE SEQUENCE [MRNA]</scope>
    <scope>TISSUE SPECIFICITY</scope>
</reference>
<reference key="2">
    <citation type="journal article" date="2004" name="Genome Res.">
        <title>The status, quality, and expansion of the NIH full-length cDNA project: the Mammalian Gene Collection (MGC).</title>
        <authorList>
            <consortium name="The MGC Project Team"/>
        </authorList>
    </citation>
    <scope>NUCLEOTIDE SEQUENCE [LARGE SCALE MRNA]</scope>
    <source>
        <tissue>Brain</tissue>
    </source>
</reference>
<accession>Q0VB07</accession>
<accession>Q6R1Z1</accession>
<gene>
    <name type="primary">Pglyrp4</name>
    <name type="synonym">Pgrpib</name>
</gene>
<comment type="function">
    <text evidence="1">Pattern receptor that binds to murein peptidoglycans (PGN) of Gram-positive bacteria. Has bactericidal activity towards Gram-positive bacteria. May kill Gram-positive bacteria by interfering with peptidoglycan biosynthesis. Also binds to Gram-negative bacteria, and has bacteriostatic activity towards Gram-negative bacteria. Plays a role in innate immunity (By similarity).</text>
</comment>
<comment type="subunit">
    <text evidence="1">Homodimer; disulfide-linked. Heterodimer with PGLYRP3; disulfide-linked (By similarity).</text>
</comment>
<comment type="subcellular location">
    <subcellularLocation>
        <location evidence="1">Secreted</location>
    </subcellularLocation>
</comment>
<comment type="tissue specificity">
    <text evidence="3">Ubiquitous.</text>
</comment>
<comment type="similarity">
    <text evidence="4">Belongs to the N-acetylmuramoyl-L-alanine amidase 2 family.</text>
</comment>
<proteinExistence type="evidence at transcript level"/>
<sequence length="374" mass="41190">MLSWLLVFSILVLLAQGVSSWENPQTDQVSEGLQQLFGNISQLFEKGILGRDDVFTMVSREEWGAEAIGCSSKLSRPVDVLVIHHIPGLECHNKTVCSQKLRELQAYHIHNSWCDVAYNFLVGDDGRVYEGVGWNVQGSHDQGYKNISLGVAFFGTQEGHSPSPVALSAMKGLISYAVKKGHLSSKYIQPLLAKSEDCLVPPQKGKQKKACPHIVPRSVWGARDSHCSRMTLPAKYAIILHTAGRTCSQPDECRLLVRDLQSFFMNRLNACDIGYNFLVGQDGGVYEGVGWNNQGSKTDSYNDISLSITFMGTFTGSPPNAAALEAAQDLIRCAVVKGYLTPNYLLMGHSDVSNTLSPGQALYNIIKTWPHFKH</sequence>